<name>SYDND_BORPA</name>
<dbReference type="EC" id="6.1.1.23" evidence="1"/>
<dbReference type="EMBL" id="BX640423">
    <property type="protein sequence ID" value="CAE39856.1"/>
    <property type="molecule type" value="Genomic_DNA"/>
</dbReference>
<dbReference type="RefSeq" id="WP_003807038.1">
    <property type="nucleotide sequence ID" value="NC_002928.3"/>
</dbReference>
<dbReference type="SMR" id="Q7W275"/>
<dbReference type="GeneID" id="93206345"/>
<dbReference type="KEGG" id="bpa:BPP0115"/>
<dbReference type="HOGENOM" id="CLU_014330_3_2_4"/>
<dbReference type="Proteomes" id="UP000001421">
    <property type="component" value="Chromosome"/>
</dbReference>
<dbReference type="GO" id="GO:0005737">
    <property type="term" value="C:cytoplasm"/>
    <property type="evidence" value="ECO:0007669"/>
    <property type="project" value="UniProtKB-SubCell"/>
</dbReference>
<dbReference type="GO" id="GO:0004815">
    <property type="term" value="F:aspartate-tRNA ligase activity"/>
    <property type="evidence" value="ECO:0007669"/>
    <property type="project" value="UniProtKB-UniRule"/>
</dbReference>
<dbReference type="GO" id="GO:0050560">
    <property type="term" value="F:aspartate-tRNA(Asn) ligase activity"/>
    <property type="evidence" value="ECO:0007669"/>
    <property type="project" value="UniProtKB-EC"/>
</dbReference>
<dbReference type="GO" id="GO:0005524">
    <property type="term" value="F:ATP binding"/>
    <property type="evidence" value="ECO:0007669"/>
    <property type="project" value="UniProtKB-UniRule"/>
</dbReference>
<dbReference type="GO" id="GO:0003676">
    <property type="term" value="F:nucleic acid binding"/>
    <property type="evidence" value="ECO:0007669"/>
    <property type="project" value="InterPro"/>
</dbReference>
<dbReference type="GO" id="GO:0006422">
    <property type="term" value="P:aspartyl-tRNA aminoacylation"/>
    <property type="evidence" value="ECO:0007669"/>
    <property type="project" value="UniProtKB-UniRule"/>
</dbReference>
<dbReference type="CDD" id="cd00777">
    <property type="entry name" value="AspRS_core"/>
    <property type="match status" value="1"/>
</dbReference>
<dbReference type="CDD" id="cd04317">
    <property type="entry name" value="EcAspRS_like_N"/>
    <property type="match status" value="1"/>
</dbReference>
<dbReference type="Gene3D" id="3.30.930.10">
    <property type="entry name" value="Bira Bifunctional Protein, Domain 2"/>
    <property type="match status" value="1"/>
</dbReference>
<dbReference type="Gene3D" id="3.30.1360.30">
    <property type="entry name" value="GAD-like domain"/>
    <property type="match status" value="1"/>
</dbReference>
<dbReference type="Gene3D" id="2.40.50.140">
    <property type="entry name" value="Nucleic acid-binding proteins"/>
    <property type="match status" value="1"/>
</dbReference>
<dbReference type="HAMAP" id="MF_00044">
    <property type="entry name" value="Asp_tRNA_synth_type1"/>
    <property type="match status" value="1"/>
</dbReference>
<dbReference type="InterPro" id="IPR004364">
    <property type="entry name" value="Aa-tRNA-synt_II"/>
</dbReference>
<dbReference type="InterPro" id="IPR006195">
    <property type="entry name" value="aa-tRNA-synth_II"/>
</dbReference>
<dbReference type="InterPro" id="IPR045864">
    <property type="entry name" value="aa-tRNA-synth_II/BPL/LPL"/>
</dbReference>
<dbReference type="InterPro" id="IPR004524">
    <property type="entry name" value="Asp-tRNA-ligase_1"/>
</dbReference>
<dbReference type="InterPro" id="IPR047089">
    <property type="entry name" value="Asp-tRNA-ligase_1_N"/>
</dbReference>
<dbReference type="InterPro" id="IPR002312">
    <property type="entry name" value="Asp/Asn-tRNA-synth_IIb"/>
</dbReference>
<dbReference type="InterPro" id="IPR047090">
    <property type="entry name" value="AspRS_core"/>
</dbReference>
<dbReference type="InterPro" id="IPR004115">
    <property type="entry name" value="GAD-like_sf"/>
</dbReference>
<dbReference type="InterPro" id="IPR029351">
    <property type="entry name" value="GAD_dom"/>
</dbReference>
<dbReference type="InterPro" id="IPR012340">
    <property type="entry name" value="NA-bd_OB-fold"/>
</dbReference>
<dbReference type="InterPro" id="IPR004365">
    <property type="entry name" value="NA-bd_OB_tRNA"/>
</dbReference>
<dbReference type="NCBIfam" id="TIGR00459">
    <property type="entry name" value="aspS_bact"/>
    <property type="match status" value="1"/>
</dbReference>
<dbReference type="NCBIfam" id="NF001750">
    <property type="entry name" value="PRK00476.1"/>
    <property type="match status" value="1"/>
</dbReference>
<dbReference type="PANTHER" id="PTHR22594:SF5">
    <property type="entry name" value="ASPARTATE--TRNA LIGASE, MITOCHONDRIAL"/>
    <property type="match status" value="1"/>
</dbReference>
<dbReference type="PANTHER" id="PTHR22594">
    <property type="entry name" value="ASPARTYL/LYSYL-TRNA SYNTHETASE"/>
    <property type="match status" value="1"/>
</dbReference>
<dbReference type="Pfam" id="PF02938">
    <property type="entry name" value="GAD"/>
    <property type="match status" value="1"/>
</dbReference>
<dbReference type="Pfam" id="PF00152">
    <property type="entry name" value="tRNA-synt_2"/>
    <property type="match status" value="1"/>
</dbReference>
<dbReference type="Pfam" id="PF01336">
    <property type="entry name" value="tRNA_anti-codon"/>
    <property type="match status" value="1"/>
</dbReference>
<dbReference type="PRINTS" id="PR01042">
    <property type="entry name" value="TRNASYNTHASP"/>
</dbReference>
<dbReference type="SUPFAM" id="SSF55681">
    <property type="entry name" value="Class II aaRS and biotin synthetases"/>
    <property type="match status" value="1"/>
</dbReference>
<dbReference type="SUPFAM" id="SSF55261">
    <property type="entry name" value="GAD domain-like"/>
    <property type="match status" value="1"/>
</dbReference>
<dbReference type="SUPFAM" id="SSF50249">
    <property type="entry name" value="Nucleic acid-binding proteins"/>
    <property type="match status" value="1"/>
</dbReference>
<dbReference type="PROSITE" id="PS50862">
    <property type="entry name" value="AA_TRNA_LIGASE_II"/>
    <property type="match status" value="1"/>
</dbReference>
<keyword id="KW-0030">Aminoacyl-tRNA synthetase</keyword>
<keyword id="KW-0067">ATP-binding</keyword>
<keyword id="KW-0963">Cytoplasm</keyword>
<keyword id="KW-0436">Ligase</keyword>
<keyword id="KW-0547">Nucleotide-binding</keyword>
<keyword id="KW-0648">Protein biosynthesis</keyword>
<comment type="function">
    <text evidence="1">Aspartyl-tRNA synthetase with relaxed tRNA specificity since it is able to aspartylate not only its cognate tRNA(Asp) but also tRNA(Asn). Reaction proceeds in two steps: L-aspartate is first activated by ATP to form Asp-AMP and then transferred to the acceptor end of tRNA(Asp/Asn).</text>
</comment>
<comment type="catalytic activity">
    <reaction evidence="1">
        <text>tRNA(Asx) + L-aspartate + ATP = L-aspartyl-tRNA(Asx) + AMP + diphosphate</text>
        <dbReference type="Rhea" id="RHEA:18349"/>
        <dbReference type="Rhea" id="RHEA-COMP:9710"/>
        <dbReference type="Rhea" id="RHEA-COMP:9711"/>
        <dbReference type="ChEBI" id="CHEBI:29991"/>
        <dbReference type="ChEBI" id="CHEBI:30616"/>
        <dbReference type="ChEBI" id="CHEBI:33019"/>
        <dbReference type="ChEBI" id="CHEBI:78442"/>
        <dbReference type="ChEBI" id="CHEBI:78516"/>
        <dbReference type="ChEBI" id="CHEBI:456215"/>
        <dbReference type="EC" id="6.1.1.23"/>
    </reaction>
</comment>
<comment type="subunit">
    <text evidence="1">Homodimer.</text>
</comment>
<comment type="subcellular location">
    <subcellularLocation>
        <location evidence="1">Cytoplasm</location>
    </subcellularLocation>
</comment>
<comment type="similarity">
    <text evidence="1">Belongs to the class-II aminoacyl-tRNA synthetase family. Type 1 subfamily.</text>
</comment>
<sequence>MRTCYTGQVCRDHLGQTVTLYGWVNRRRDHGGVIFIDLRDRTGLAQIVFDPDNAEAFGTAERLRNEFCISITGLVRLRPEGTANAELASGEVEVLCQQVEILNASVTPPFQLDDDNLSETTRLTHRVLDLRRPQMQHNLMLRYRVSIEVRKYLDQLGFIDIETPMLTKSTPEGARDYLVPSRVNAGYFFALPQSPQLFKQMLMVSGFDRYYQITKCFRDEDLRADRQPEFTQIDCETSFLNEVEIREIFEGMIRHVFKVVQDVDLPTPFPIMSWTEAMQRYGSDKPDLRVNLEFTDMTDVMRDVDFKVFASAATTAGSRVVALRVQGGGEMSRSEIDAYTQFVGIYGAKGLAYIKVNDVAKGREGLQSPIVKNLHDAALAELVKRTGAQNGDIIFFGADRAKVVNDAIGALRVKIGHSEFGKKAGLFSGGWKPLWVVDFPMFEYDEEENRYTAAHHPFTSPKDGHEDFLESDPGKAVAKAYDMVLNGWEIGGGSVRIHREEVQSKVFRALKIDAEEAREKFGFLLDALQYGAPPHGGIAFGLDRIITMMAGAESIRDVIAFPKTQRAQCLLTGAPSEVDEKQLRELHIRLRNVEVK</sequence>
<evidence type="ECO:0000255" key="1">
    <source>
        <dbReference type="HAMAP-Rule" id="MF_00044"/>
    </source>
</evidence>
<protein>
    <recommendedName>
        <fullName evidence="1">Aspartate--tRNA(Asp/Asn) ligase</fullName>
        <ecNumber evidence="1">6.1.1.23</ecNumber>
    </recommendedName>
    <alternativeName>
        <fullName evidence="1">Aspartyl-tRNA synthetase</fullName>
        <shortName evidence="1">AspRS</shortName>
    </alternativeName>
    <alternativeName>
        <fullName evidence="1">Non-discriminating aspartyl-tRNA synthetase</fullName>
        <shortName evidence="1">ND-AspRS</shortName>
    </alternativeName>
</protein>
<proteinExistence type="inferred from homology"/>
<accession>Q7W275</accession>
<reference key="1">
    <citation type="journal article" date="2003" name="Nat. Genet.">
        <title>Comparative analysis of the genome sequences of Bordetella pertussis, Bordetella parapertussis and Bordetella bronchiseptica.</title>
        <authorList>
            <person name="Parkhill J."/>
            <person name="Sebaihia M."/>
            <person name="Preston A."/>
            <person name="Murphy L.D."/>
            <person name="Thomson N.R."/>
            <person name="Harris D.E."/>
            <person name="Holden M.T.G."/>
            <person name="Churcher C.M."/>
            <person name="Bentley S.D."/>
            <person name="Mungall K.L."/>
            <person name="Cerdeno-Tarraga A.-M."/>
            <person name="Temple L."/>
            <person name="James K.D."/>
            <person name="Harris B."/>
            <person name="Quail M.A."/>
            <person name="Achtman M."/>
            <person name="Atkin R."/>
            <person name="Baker S."/>
            <person name="Basham D."/>
            <person name="Bason N."/>
            <person name="Cherevach I."/>
            <person name="Chillingworth T."/>
            <person name="Collins M."/>
            <person name="Cronin A."/>
            <person name="Davis P."/>
            <person name="Doggett J."/>
            <person name="Feltwell T."/>
            <person name="Goble A."/>
            <person name="Hamlin N."/>
            <person name="Hauser H."/>
            <person name="Holroyd S."/>
            <person name="Jagels K."/>
            <person name="Leather S."/>
            <person name="Moule S."/>
            <person name="Norberczak H."/>
            <person name="O'Neil S."/>
            <person name="Ormond D."/>
            <person name="Price C."/>
            <person name="Rabbinowitsch E."/>
            <person name="Rutter S."/>
            <person name="Sanders M."/>
            <person name="Saunders D."/>
            <person name="Seeger K."/>
            <person name="Sharp S."/>
            <person name="Simmonds M."/>
            <person name="Skelton J."/>
            <person name="Squares R."/>
            <person name="Squares S."/>
            <person name="Stevens K."/>
            <person name="Unwin L."/>
            <person name="Whitehead S."/>
            <person name="Barrell B.G."/>
            <person name="Maskell D.J."/>
        </authorList>
    </citation>
    <scope>NUCLEOTIDE SEQUENCE [LARGE SCALE GENOMIC DNA]</scope>
    <source>
        <strain>12822 / ATCC BAA-587 / NCTC 13253</strain>
    </source>
</reference>
<organism>
    <name type="scientific">Bordetella parapertussis (strain 12822 / ATCC BAA-587 / NCTC 13253)</name>
    <dbReference type="NCBI Taxonomy" id="257311"/>
    <lineage>
        <taxon>Bacteria</taxon>
        <taxon>Pseudomonadati</taxon>
        <taxon>Pseudomonadota</taxon>
        <taxon>Betaproteobacteria</taxon>
        <taxon>Burkholderiales</taxon>
        <taxon>Alcaligenaceae</taxon>
        <taxon>Bordetella</taxon>
    </lineage>
</organism>
<feature type="chain" id="PRO_0000110838" description="Aspartate--tRNA(Asp/Asn) ligase">
    <location>
        <begin position="1"/>
        <end position="596"/>
    </location>
</feature>
<feature type="region of interest" description="Aspartate" evidence="1">
    <location>
        <begin position="196"/>
        <end position="199"/>
    </location>
</feature>
<feature type="binding site" evidence="1">
    <location>
        <position position="172"/>
    </location>
    <ligand>
        <name>L-aspartate</name>
        <dbReference type="ChEBI" id="CHEBI:29991"/>
    </ligand>
</feature>
<feature type="binding site" evidence="1">
    <location>
        <begin position="218"/>
        <end position="220"/>
    </location>
    <ligand>
        <name>ATP</name>
        <dbReference type="ChEBI" id="CHEBI:30616"/>
    </ligand>
</feature>
<feature type="binding site" evidence="1">
    <location>
        <position position="218"/>
    </location>
    <ligand>
        <name>L-aspartate</name>
        <dbReference type="ChEBI" id="CHEBI:29991"/>
    </ligand>
</feature>
<feature type="binding site" evidence="1">
    <location>
        <position position="227"/>
    </location>
    <ligand>
        <name>ATP</name>
        <dbReference type="ChEBI" id="CHEBI:30616"/>
    </ligand>
</feature>
<feature type="binding site" evidence="1">
    <location>
        <position position="455"/>
    </location>
    <ligand>
        <name>L-aspartate</name>
        <dbReference type="ChEBI" id="CHEBI:29991"/>
    </ligand>
</feature>
<feature type="binding site" evidence="1">
    <location>
        <position position="489"/>
    </location>
    <ligand>
        <name>ATP</name>
        <dbReference type="ChEBI" id="CHEBI:30616"/>
    </ligand>
</feature>
<feature type="binding site" evidence="1">
    <location>
        <position position="496"/>
    </location>
    <ligand>
        <name>L-aspartate</name>
        <dbReference type="ChEBI" id="CHEBI:29991"/>
    </ligand>
</feature>
<feature type="binding site" evidence="1">
    <location>
        <begin position="541"/>
        <end position="544"/>
    </location>
    <ligand>
        <name>ATP</name>
        <dbReference type="ChEBI" id="CHEBI:30616"/>
    </ligand>
</feature>
<feature type="site" description="Important for tRNA non-discrimination" evidence="1">
    <location>
        <position position="30"/>
    </location>
</feature>
<feature type="site" description="Important for tRNA non-discrimination" evidence="1">
    <location>
        <position position="81"/>
    </location>
</feature>
<gene>
    <name evidence="1" type="primary">aspS</name>
    <name type="ordered locus">BPP0115</name>
</gene>